<sequence length="331" mass="35648">MSKVAFLGAGSFGTSLGILLGNKGVTVSLWDRDENVINDINVNRKNDKYIKDLTIPTNVTAYKDLDEALNGAEYVVLAVPSHVIRTACKNLKGKINDDVIIINIAKGIEEGTNLRLSQVINQELPNNKVVVLSGPSHAEEVSKGIPTTLVASSECMECAEKVQDLFMDKNFRIYTNDDIIGVEIGGAVKNIIALAAGVCDGIGYGDNSKAALMTRGMAEIARIGIKMGGKAETFFGLTGMGDLIVTCTSMHSRNRRAGILIGQGKTAEEAIKEVGMVVEGIKACKAFYELKEKEGVTMPITDIAYKVLFEGAKAENAVSLLMERDKKKEEI</sequence>
<keyword id="KW-0963">Cytoplasm</keyword>
<keyword id="KW-0444">Lipid biosynthesis</keyword>
<keyword id="KW-0443">Lipid metabolism</keyword>
<keyword id="KW-0520">NAD</keyword>
<keyword id="KW-0521">NADP</keyword>
<keyword id="KW-0547">Nucleotide-binding</keyword>
<keyword id="KW-0560">Oxidoreductase</keyword>
<keyword id="KW-0594">Phospholipid biosynthesis</keyword>
<keyword id="KW-1208">Phospholipid metabolism</keyword>
<protein>
    <recommendedName>
        <fullName evidence="1">Glycerol-3-phosphate dehydrogenase [NAD(P)+]</fullName>
        <ecNumber evidence="1">1.1.1.94</ecNumber>
    </recommendedName>
    <alternativeName>
        <fullName evidence="1">NAD(P)(+)-dependent glycerol-3-phosphate dehydrogenase</fullName>
    </alternativeName>
    <alternativeName>
        <fullName evidence="1">NAD(P)H-dependent dihydroxyacetone-phosphate reductase</fullName>
    </alternativeName>
</protein>
<gene>
    <name evidence="1" type="primary">gpsA</name>
    <name type="ordered locus">CPR_1725</name>
</gene>
<evidence type="ECO:0000255" key="1">
    <source>
        <dbReference type="HAMAP-Rule" id="MF_00394"/>
    </source>
</evidence>
<organism>
    <name type="scientific">Clostridium perfringens (strain SM101 / Type A)</name>
    <dbReference type="NCBI Taxonomy" id="289380"/>
    <lineage>
        <taxon>Bacteria</taxon>
        <taxon>Bacillati</taxon>
        <taxon>Bacillota</taxon>
        <taxon>Clostridia</taxon>
        <taxon>Eubacteriales</taxon>
        <taxon>Clostridiaceae</taxon>
        <taxon>Clostridium</taxon>
    </lineage>
</organism>
<proteinExistence type="inferred from homology"/>
<dbReference type="EC" id="1.1.1.94" evidence="1"/>
<dbReference type="EMBL" id="CP000312">
    <property type="protein sequence ID" value="ABG87716.1"/>
    <property type="molecule type" value="Genomic_DNA"/>
</dbReference>
<dbReference type="RefSeq" id="WP_011592638.1">
    <property type="nucleotide sequence ID" value="NC_008262.1"/>
</dbReference>
<dbReference type="SMR" id="Q0SS67"/>
<dbReference type="KEGG" id="cpr:CPR_1725"/>
<dbReference type="UniPathway" id="UPA00940"/>
<dbReference type="Proteomes" id="UP000001824">
    <property type="component" value="Chromosome"/>
</dbReference>
<dbReference type="GO" id="GO:0005829">
    <property type="term" value="C:cytosol"/>
    <property type="evidence" value="ECO:0007669"/>
    <property type="project" value="TreeGrafter"/>
</dbReference>
<dbReference type="GO" id="GO:0047952">
    <property type="term" value="F:glycerol-3-phosphate dehydrogenase [NAD(P)+] activity"/>
    <property type="evidence" value="ECO:0007669"/>
    <property type="project" value="UniProtKB-UniRule"/>
</dbReference>
<dbReference type="GO" id="GO:0051287">
    <property type="term" value="F:NAD binding"/>
    <property type="evidence" value="ECO:0007669"/>
    <property type="project" value="InterPro"/>
</dbReference>
<dbReference type="GO" id="GO:0005975">
    <property type="term" value="P:carbohydrate metabolic process"/>
    <property type="evidence" value="ECO:0007669"/>
    <property type="project" value="InterPro"/>
</dbReference>
<dbReference type="GO" id="GO:0046167">
    <property type="term" value="P:glycerol-3-phosphate biosynthetic process"/>
    <property type="evidence" value="ECO:0007669"/>
    <property type="project" value="UniProtKB-UniRule"/>
</dbReference>
<dbReference type="GO" id="GO:0046168">
    <property type="term" value="P:glycerol-3-phosphate catabolic process"/>
    <property type="evidence" value="ECO:0007669"/>
    <property type="project" value="InterPro"/>
</dbReference>
<dbReference type="GO" id="GO:0006650">
    <property type="term" value="P:glycerophospholipid metabolic process"/>
    <property type="evidence" value="ECO:0007669"/>
    <property type="project" value="UniProtKB-UniRule"/>
</dbReference>
<dbReference type="GO" id="GO:0008654">
    <property type="term" value="P:phospholipid biosynthetic process"/>
    <property type="evidence" value="ECO:0007669"/>
    <property type="project" value="UniProtKB-KW"/>
</dbReference>
<dbReference type="FunFam" id="1.10.1040.10:FF:000001">
    <property type="entry name" value="Glycerol-3-phosphate dehydrogenase [NAD(P)+]"/>
    <property type="match status" value="1"/>
</dbReference>
<dbReference type="FunFam" id="3.40.50.720:FF:000019">
    <property type="entry name" value="Glycerol-3-phosphate dehydrogenase [NAD(P)+]"/>
    <property type="match status" value="1"/>
</dbReference>
<dbReference type="Gene3D" id="1.10.1040.10">
    <property type="entry name" value="N-(1-d-carboxylethyl)-l-norvaline Dehydrogenase, domain 2"/>
    <property type="match status" value="1"/>
</dbReference>
<dbReference type="Gene3D" id="3.40.50.720">
    <property type="entry name" value="NAD(P)-binding Rossmann-like Domain"/>
    <property type="match status" value="1"/>
</dbReference>
<dbReference type="HAMAP" id="MF_00394">
    <property type="entry name" value="NAD_Glyc3P_dehydrog"/>
    <property type="match status" value="1"/>
</dbReference>
<dbReference type="InterPro" id="IPR008927">
    <property type="entry name" value="6-PGluconate_DH-like_C_sf"/>
</dbReference>
<dbReference type="InterPro" id="IPR013328">
    <property type="entry name" value="6PGD_dom2"/>
</dbReference>
<dbReference type="InterPro" id="IPR006168">
    <property type="entry name" value="G3P_DH_NAD-dep"/>
</dbReference>
<dbReference type="InterPro" id="IPR006109">
    <property type="entry name" value="G3P_DH_NAD-dep_C"/>
</dbReference>
<dbReference type="InterPro" id="IPR011128">
    <property type="entry name" value="G3P_DH_NAD-dep_N"/>
</dbReference>
<dbReference type="InterPro" id="IPR036291">
    <property type="entry name" value="NAD(P)-bd_dom_sf"/>
</dbReference>
<dbReference type="NCBIfam" id="NF000940">
    <property type="entry name" value="PRK00094.1-2"/>
    <property type="match status" value="1"/>
</dbReference>
<dbReference type="NCBIfam" id="NF000941">
    <property type="entry name" value="PRK00094.1-3"/>
    <property type="match status" value="1"/>
</dbReference>
<dbReference type="NCBIfam" id="NF000942">
    <property type="entry name" value="PRK00094.1-4"/>
    <property type="match status" value="1"/>
</dbReference>
<dbReference type="PANTHER" id="PTHR11728">
    <property type="entry name" value="GLYCEROL-3-PHOSPHATE DEHYDROGENASE"/>
    <property type="match status" value="1"/>
</dbReference>
<dbReference type="PANTHER" id="PTHR11728:SF1">
    <property type="entry name" value="GLYCEROL-3-PHOSPHATE DEHYDROGENASE [NAD(+)] 2, CHLOROPLASTIC"/>
    <property type="match status" value="1"/>
</dbReference>
<dbReference type="Pfam" id="PF07479">
    <property type="entry name" value="NAD_Gly3P_dh_C"/>
    <property type="match status" value="1"/>
</dbReference>
<dbReference type="Pfam" id="PF01210">
    <property type="entry name" value="NAD_Gly3P_dh_N"/>
    <property type="match status" value="1"/>
</dbReference>
<dbReference type="PIRSF" id="PIRSF000114">
    <property type="entry name" value="Glycerol-3-P_dh"/>
    <property type="match status" value="1"/>
</dbReference>
<dbReference type="PRINTS" id="PR00077">
    <property type="entry name" value="GPDHDRGNASE"/>
</dbReference>
<dbReference type="SUPFAM" id="SSF48179">
    <property type="entry name" value="6-phosphogluconate dehydrogenase C-terminal domain-like"/>
    <property type="match status" value="1"/>
</dbReference>
<dbReference type="SUPFAM" id="SSF51735">
    <property type="entry name" value="NAD(P)-binding Rossmann-fold domains"/>
    <property type="match status" value="1"/>
</dbReference>
<dbReference type="PROSITE" id="PS00957">
    <property type="entry name" value="NAD_G3PDH"/>
    <property type="match status" value="1"/>
</dbReference>
<feature type="chain" id="PRO_1000049498" description="Glycerol-3-phosphate dehydrogenase [NAD(P)+]">
    <location>
        <begin position="1"/>
        <end position="331"/>
    </location>
</feature>
<feature type="active site" description="Proton acceptor" evidence="1">
    <location>
        <position position="189"/>
    </location>
</feature>
<feature type="binding site" evidence="1">
    <location>
        <position position="11"/>
    </location>
    <ligand>
        <name>NADPH</name>
        <dbReference type="ChEBI" id="CHEBI:57783"/>
    </ligand>
</feature>
<feature type="binding site" evidence="1">
    <location>
        <position position="12"/>
    </location>
    <ligand>
        <name>NADPH</name>
        <dbReference type="ChEBI" id="CHEBI:57783"/>
    </ligand>
</feature>
<feature type="binding site" evidence="1">
    <location>
        <position position="32"/>
    </location>
    <ligand>
        <name>NADPH</name>
        <dbReference type="ChEBI" id="CHEBI:57783"/>
    </ligand>
</feature>
<feature type="binding site" evidence="1">
    <location>
        <position position="106"/>
    </location>
    <ligand>
        <name>NADPH</name>
        <dbReference type="ChEBI" id="CHEBI:57783"/>
    </ligand>
</feature>
<feature type="binding site" evidence="1">
    <location>
        <position position="106"/>
    </location>
    <ligand>
        <name>sn-glycerol 3-phosphate</name>
        <dbReference type="ChEBI" id="CHEBI:57597"/>
    </ligand>
</feature>
<feature type="binding site" evidence="1">
    <location>
        <position position="134"/>
    </location>
    <ligand>
        <name>sn-glycerol 3-phosphate</name>
        <dbReference type="ChEBI" id="CHEBI:57597"/>
    </ligand>
</feature>
<feature type="binding site" evidence="1">
    <location>
        <position position="136"/>
    </location>
    <ligand>
        <name>sn-glycerol 3-phosphate</name>
        <dbReference type="ChEBI" id="CHEBI:57597"/>
    </ligand>
</feature>
<feature type="binding site" evidence="1">
    <location>
        <position position="138"/>
    </location>
    <ligand>
        <name>NADPH</name>
        <dbReference type="ChEBI" id="CHEBI:57783"/>
    </ligand>
</feature>
<feature type="binding site" evidence="1">
    <location>
        <position position="189"/>
    </location>
    <ligand>
        <name>sn-glycerol 3-phosphate</name>
        <dbReference type="ChEBI" id="CHEBI:57597"/>
    </ligand>
</feature>
<feature type="binding site" evidence="1">
    <location>
        <position position="242"/>
    </location>
    <ligand>
        <name>sn-glycerol 3-phosphate</name>
        <dbReference type="ChEBI" id="CHEBI:57597"/>
    </ligand>
</feature>
<feature type="binding site" evidence="1">
    <location>
        <position position="252"/>
    </location>
    <ligand>
        <name>sn-glycerol 3-phosphate</name>
        <dbReference type="ChEBI" id="CHEBI:57597"/>
    </ligand>
</feature>
<feature type="binding site" evidence="1">
    <location>
        <position position="253"/>
    </location>
    <ligand>
        <name>NADPH</name>
        <dbReference type="ChEBI" id="CHEBI:57783"/>
    </ligand>
</feature>
<feature type="binding site" evidence="1">
    <location>
        <position position="253"/>
    </location>
    <ligand>
        <name>sn-glycerol 3-phosphate</name>
        <dbReference type="ChEBI" id="CHEBI:57597"/>
    </ligand>
</feature>
<feature type="binding site" evidence="1">
    <location>
        <position position="254"/>
    </location>
    <ligand>
        <name>sn-glycerol 3-phosphate</name>
        <dbReference type="ChEBI" id="CHEBI:57597"/>
    </ligand>
</feature>
<feature type="binding site" evidence="1">
    <location>
        <position position="277"/>
    </location>
    <ligand>
        <name>NADPH</name>
        <dbReference type="ChEBI" id="CHEBI:57783"/>
    </ligand>
</feature>
<feature type="binding site" evidence="1">
    <location>
        <position position="279"/>
    </location>
    <ligand>
        <name>NADPH</name>
        <dbReference type="ChEBI" id="CHEBI:57783"/>
    </ligand>
</feature>
<reference key="1">
    <citation type="journal article" date="2006" name="Genome Res.">
        <title>Skewed genomic variability in strains of the toxigenic bacterial pathogen, Clostridium perfringens.</title>
        <authorList>
            <person name="Myers G.S.A."/>
            <person name="Rasko D.A."/>
            <person name="Cheung J.K."/>
            <person name="Ravel J."/>
            <person name="Seshadri R."/>
            <person name="DeBoy R.T."/>
            <person name="Ren Q."/>
            <person name="Varga J."/>
            <person name="Awad M.M."/>
            <person name="Brinkac L.M."/>
            <person name="Daugherty S.C."/>
            <person name="Haft D.H."/>
            <person name="Dodson R.J."/>
            <person name="Madupu R."/>
            <person name="Nelson W.C."/>
            <person name="Rosovitz M.J."/>
            <person name="Sullivan S.A."/>
            <person name="Khouri H."/>
            <person name="Dimitrov G.I."/>
            <person name="Watkins K.L."/>
            <person name="Mulligan S."/>
            <person name="Benton J."/>
            <person name="Radune D."/>
            <person name="Fisher D.J."/>
            <person name="Atkins H.S."/>
            <person name="Hiscox T."/>
            <person name="Jost B.H."/>
            <person name="Billington S.J."/>
            <person name="Songer J.G."/>
            <person name="McClane B.A."/>
            <person name="Titball R.W."/>
            <person name="Rood J.I."/>
            <person name="Melville S.B."/>
            <person name="Paulsen I.T."/>
        </authorList>
    </citation>
    <scope>NUCLEOTIDE SEQUENCE [LARGE SCALE GENOMIC DNA]</scope>
    <source>
        <strain>SM101 / Type A</strain>
    </source>
</reference>
<comment type="function">
    <text evidence="1">Catalyzes the reduction of the glycolytic intermediate dihydroxyacetone phosphate (DHAP) to sn-glycerol 3-phosphate (G3P), the key precursor for phospholipid synthesis.</text>
</comment>
<comment type="catalytic activity">
    <reaction evidence="1">
        <text>sn-glycerol 3-phosphate + NAD(+) = dihydroxyacetone phosphate + NADH + H(+)</text>
        <dbReference type="Rhea" id="RHEA:11092"/>
        <dbReference type="ChEBI" id="CHEBI:15378"/>
        <dbReference type="ChEBI" id="CHEBI:57540"/>
        <dbReference type="ChEBI" id="CHEBI:57597"/>
        <dbReference type="ChEBI" id="CHEBI:57642"/>
        <dbReference type="ChEBI" id="CHEBI:57945"/>
        <dbReference type="EC" id="1.1.1.94"/>
    </reaction>
    <physiologicalReaction direction="right-to-left" evidence="1">
        <dbReference type="Rhea" id="RHEA:11094"/>
    </physiologicalReaction>
</comment>
<comment type="catalytic activity">
    <reaction evidence="1">
        <text>sn-glycerol 3-phosphate + NADP(+) = dihydroxyacetone phosphate + NADPH + H(+)</text>
        <dbReference type="Rhea" id="RHEA:11096"/>
        <dbReference type="ChEBI" id="CHEBI:15378"/>
        <dbReference type="ChEBI" id="CHEBI:57597"/>
        <dbReference type="ChEBI" id="CHEBI:57642"/>
        <dbReference type="ChEBI" id="CHEBI:57783"/>
        <dbReference type="ChEBI" id="CHEBI:58349"/>
        <dbReference type="EC" id="1.1.1.94"/>
    </reaction>
    <physiologicalReaction direction="right-to-left" evidence="1">
        <dbReference type="Rhea" id="RHEA:11098"/>
    </physiologicalReaction>
</comment>
<comment type="pathway">
    <text evidence="1">Membrane lipid metabolism; glycerophospholipid metabolism.</text>
</comment>
<comment type="subcellular location">
    <subcellularLocation>
        <location evidence="1">Cytoplasm</location>
    </subcellularLocation>
</comment>
<comment type="similarity">
    <text evidence="1">Belongs to the NAD-dependent glycerol-3-phosphate dehydrogenase family.</text>
</comment>
<name>GPDA_CLOPS</name>
<accession>Q0SS67</accession>